<proteinExistence type="inferred from homology"/>
<organism>
    <name type="scientific">Komagataella phaffii (strain GS115 / ATCC 20864)</name>
    <name type="common">Yeast</name>
    <name type="synonym">Pichia pastoris</name>
    <dbReference type="NCBI Taxonomy" id="644223"/>
    <lineage>
        <taxon>Eukaryota</taxon>
        <taxon>Fungi</taxon>
        <taxon>Dikarya</taxon>
        <taxon>Ascomycota</taxon>
        <taxon>Saccharomycotina</taxon>
        <taxon>Pichiomycetes</taxon>
        <taxon>Pichiales</taxon>
        <taxon>Pichiaceae</taxon>
        <taxon>Komagataella</taxon>
    </lineage>
</organism>
<keyword id="KW-0256">Endoplasmic reticulum</keyword>
<keyword id="KW-0472">Membrane</keyword>
<keyword id="KW-1185">Reference proteome</keyword>
<keyword id="KW-0732">Signal</keyword>
<keyword id="KW-0812">Transmembrane</keyword>
<keyword id="KW-1133">Transmembrane helix</keyword>
<reference key="1">
    <citation type="journal article" date="2009" name="Nat. Biotechnol.">
        <title>Genome sequence of the recombinant protein production host Pichia pastoris.</title>
        <authorList>
            <person name="De Schutter K."/>
            <person name="Lin Y.-C."/>
            <person name="Tiels P."/>
            <person name="Van Hecke A."/>
            <person name="Glinka S."/>
            <person name="Weber-Lehmann J."/>
            <person name="Rouze P."/>
            <person name="Van de Peer Y."/>
            <person name="Callewaert N."/>
        </authorList>
    </citation>
    <scope>NUCLEOTIDE SEQUENCE [LARGE SCALE GENOMIC DNA]</scope>
    <source>
        <strain>GS115 / ATCC 20864</strain>
    </source>
</reference>
<protein>
    <recommendedName>
        <fullName>Increased recombination centers protein 22</fullName>
    </recommendedName>
</protein>
<name>IRC22_KOMPG</name>
<sequence length="223" mass="24758">MKFLRLSTLALVGLGFLTQTTLCDPDTDEEFVPTEQKPFNIRVTYEIDEHPQSFESTKLIELVNGEEISVTYNIKNGEDESVSVVGVAGSFNDPVTGLTKRNLTASSVGPLKLLKDMTFEFTQKIGIDLEPENYLFVPSIYVLKDDQLMLLGSKNQLITVSDPQISVFQPQMLFLELVLLASFGGLIYALYATFGASYFQKPATAPKNKKVGSSNVRKTKKNK</sequence>
<evidence type="ECO:0000250" key="1"/>
<evidence type="ECO:0000255" key="2"/>
<evidence type="ECO:0000256" key="3">
    <source>
        <dbReference type="SAM" id="MobiDB-lite"/>
    </source>
</evidence>
<evidence type="ECO:0000305" key="4"/>
<accession>C4R0M5</accession>
<dbReference type="EMBL" id="FN392320">
    <property type="protein sequence ID" value="CAY69049.1"/>
    <property type="molecule type" value="Genomic_DNA"/>
</dbReference>
<dbReference type="RefSeq" id="XP_002491329.1">
    <property type="nucleotide sequence ID" value="XM_002491284.1"/>
</dbReference>
<dbReference type="SMR" id="C4R0M5"/>
<dbReference type="FunCoup" id="C4R0M5">
    <property type="interactions" value="25"/>
</dbReference>
<dbReference type="STRING" id="644223.C4R0M5"/>
<dbReference type="EnsemblFungi" id="CAY69049">
    <property type="protein sequence ID" value="CAY69049"/>
    <property type="gene ID" value="PAS_chr2-1_0426"/>
</dbReference>
<dbReference type="GeneID" id="8198894"/>
<dbReference type="KEGG" id="ppa:PAS_chr2-1_0426"/>
<dbReference type="eggNOG" id="ENOG502S7BF">
    <property type="taxonomic scope" value="Eukaryota"/>
</dbReference>
<dbReference type="HOGENOM" id="CLU_078554_0_0_1"/>
<dbReference type="InParanoid" id="C4R0M5"/>
<dbReference type="OMA" id="WLPETYK"/>
<dbReference type="OrthoDB" id="1926781at2759"/>
<dbReference type="Proteomes" id="UP000000314">
    <property type="component" value="Chromosome 2"/>
</dbReference>
<dbReference type="GO" id="GO:0005789">
    <property type="term" value="C:endoplasmic reticulum membrane"/>
    <property type="evidence" value="ECO:0007669"/>
    <property type="project" value="UniProtKB-SubCell"/>
</dbReference>
<dbReference type="InterPro" id="IPR005595">
    <property type="entry name" value="TRAP_alpha"/>
</dbReference>
<dbReference type="PANTHER" id="PTHR12924:SF0">
    <property type="entry name" value="TRANSLOCON-ASSOCIATED PROTEIN SUBUNIT ALPHA"/>
    <property type="match status" value="1"/>
</dbReference>
<dbReference type="PANTHER" id="PTHR12924">
    <property type="entry name" value="TRANSLOCON-ASSOCIATED PROTEIN, ALPHA SUBUNIT"/>
    <property type="match status" value="1"/>
</dbReference>
<dbReference type="Pfam" id="PF03896">
    <property type="entry name" value="TRAP_alpha"/>
    <property type="match status" value="1"/>
</dbReference>
<comment type="function">
    <text>Is probably involved in a pathway contributing to genomic integrity.</text>
</comment>
<comment type="subcellular location">
    <subcellularLocation>
        <location evidence="1">Endoplasmic reticulum membrane</location>
        <topology evidence="1">Single-pass type I membrane protein</topology>
    </subcellularLocation>
</comment>
<comment type="similarity">
    <text evidence="4">Belongs to the IRC22 family.</text>
</comment>
<feature type="signal peptide" evidence="2">
    <location>
        <begin position="1"/>
        <end position="23"/>
    </location>
</feature>
<feature type="chain" id="PRO_0000399083" description="Increased recombination centers protein 22">
    <location>
        <begin position="24"/>
        <end position="223"/>
    </location>
</feature>
<feature type="topological domain" description="Lumenal" evidence="2">
    <location>
        <begin position="24"/>
        <end position="171"/>
    </location>
</feature>
<feature type="transmembrane region" description="Helical" evidence="2">
    <location>
        <begin position="172"/>
        <end position="192"/>
    </location>
</feature>
<feature type="topological domain" description="Cytoplasmic" evidence="2">
    <location>
        <begin position="193"/>
        <end position="223"/>
    </location>
</feature>
<feature type="region of interest" description="Disordered" evidence="3">
    <location>
        <begin position="204"/>
        <end position="223"/>
    </location>
</feature>
<gene>
    <name type="primary">IRC22</name>
    <name type="ordered locus">PAS_chr2-1_0426</name>
</gene>